<accession>Q6LY46</accession>
<comment type="function">
    <text evidence="1">Binds to the 23S rRNA.</text>
</comment>
<comment type="cofactor">
    <cofactor evidence="1">
        <name>Zn(2+)</name>
        <dbReference type="ChEBI" id="CHEBI:29105"/>
    </cofactor>
    <text evidence="1">Binds 1 zinc ion per subunit.</text>
</comment>
<comment type="similarity">
    <text evidence="1">Belongs to the eukaryotic ribosomal protein eL37 family.</text>
</comment>
<evidence type="ECO:0000255" key="1">
    <source>
        <dbReference type="HAMAP-Rule" id="MF_00547"/>
    </source>
</evidence>
<evidence type="ECO:0000305" key="2"/>
<sequence>MTKGTPSQGKHNKGSNHIVCRRCGRRAFHVRKKVCAACGFGRSSKIKRFAWQWKKVTGKGNRVK</sequence>
<feature type="chain" id="PRO_0000139732" description="Large ribosomal subunit protein eL37">
    <location>
        <begin position="1"/>
        <end position="64"/>
    </location>
</feature>
<feature type="zinc finger region" description="C4-type" evidence="1">
    <location>
        <begin position="20"/>
        <end position="38"/>
    </location>
</feature>
<feature type="binding site" evidence="1">
    <location>
        <position position="20"/>
    </location>
    <ligand>
        <name>Zn(2+)</name>
        <dbReference type="ChEBI" id="CHEBI:29105"/>
    </ligand>
</feature>
<feature type="binding site" evidence="1">
    <location>
        <position position="23"/>
    </location>
    <ligand>
        <name>Zn(2+)</name>
        <dbReference type="ChEBI" id="CHEBI:29105"/>
    </ligand>
</feature>
<feature type="binding site" evidence="1">
    <location>
        <position position="35"/>
    </location>
    <ligand>
        <name>Zn(2+)</name>
        <dbReference type="ChEBI" id="CHEBI:29105"/>
    </ligand>
</feature>
<feature type="binding site" evidence="1">
    <location>
        <position position="38"/>
    </location>
    <ligand>
        <name>Zn(2+)</name>
        <dbReference type="ChEBI" id="CHEBI:29105"/>
    </ligand>
</feature>
<organism>
    <name type="scientific">Methanococcus maripaludis (strain DSM 14266 / JCM 13030 / NBRC 101832 / S2 / LL)</name>
    <dbReference type="NCBI Taxonomy" id="267377"/>
    <lineage>
        <taxon>Archaea</taxon>
        <taxon>Methanobacteriati</taxon>
        <taxon>Methanobacteriota</taxon>
        <taxon>Methanomada group</taxon>
        <taxon>Methanococci</taxon>
        <taxon>Methanococcales</taxon>
        <taxon>Methanococcaceae</taxon>
        <taxon>Methanococcus</taxon>
    </lineage>
</organism>
<gene>
    <name evidence="1" type="primary">rpl37e</name>
    <name type="ordered locus">MMP1147</name>
</gene>
<keyword id="KW-0479">Metal-binding</keyword>
<keyword id="KW-1185">Reference proteome</keyword>
<keyword id="KW-0687">Ribonucleoprotein</keyword>
<keyword id="KW-0689">Ribosomal protein</keyword>
<keyword id="KW-0694">RNA-binding</keyword>
<keyword id="KW-0699">rRNA-binding</keyword>
<keyword id="KW-0862">Zinc</keyword>
<keyword id="KW-0863">Zinc-finger</keyword>
<name>RL37_METMP</name>
<dbReference type="EMBL" id="BX950229">
    <property type="protein sequence ID" value="CAF30703.1"/>
    <property type="molecule type" value="Genomic_DNA"/>
</dbReference>
<dbReference type="RefSeq" id="WP_011171091.1">
    <property type="nucleotide sequence ID" value="NC_005791.1"/>
</dbReference>
<dbReference type="SMR" id="Q6LY46"/>
<dbReference type="STRING" id="267377.MMP1147"/>
<dbReference type="EnsemblBacteria" id="CAF30703">
    <property type="protein sequence ID" value="CAF30703"/>
    <property type="gene ID" value="MMP1147"/>
</dbReference>
<dbReference type="KEGG" id="mmp:MMP1147"/>
<dbReference type="PATRIC" id="fig|267377.15.peg.1180"/>
<dbReference type="eggNOG" id="arCOG04126">
    <property type="taxonomic scope" value="Archaea"/>
</dbReference>
<dbReference type="HOGENOM" id="CLU_208825_0_0_2"/>
<dbReference type="OrthoDB" id="5619at2157"/>
<dbReference type="Proteomes" id="UP000000590">
    <property type="component" value="Chromosome"/>
</dbReference>
<dbReference type="GO" id="GO:1990904">
    <property type="term" value="C:ribonucleoprotein complex"/>
    <property type="evidence" value="ECO:0007669"/>
    <property type="project" value="UniProtKB-KW"/>
</dbReference>
<dbReference type="GO" id="GO:0005840">
    <property type="term" value="C:ribosome"/>
    <property type="evidence" value="ECO:0007669"/>
    <property type="project" value="UniProtKB-KW"/>
</dbReference>
<dbReference type="GO" id="GO:0019843">
    <property type="term" value="F:rRNA binding"/>
    <property type="evidence" value="ECO:0007669"/>
    <property type="project" value="UniProtKB-KW"/>
</dbReference>
<dbReference type="GO" id="GO:0003735">
    <property type="term" value="F:structural constituent of ribosome"/>
    <property type="evidence" value="ECO:0007669"/>
    <property type="project" value="InterPro"/>
</dbReference>
<dbReference type="GO" id="GO:0008270">
    <property type="term" value="F:zinc ion binding"/>
    <property type="evidence" value="ECO:0007669"/>
    <property type="project" value="UniProtKB-UniRule"/>
</dbReference>
<dbReference type="GO" id="GO:0006412">
    <property type="term" value="P:translation"/>
    <property type="evidence" value="ECO:0007669"/>
    <property type="project" value="UniProtKB-UniRule"/>
</dbReference>
<dbReference type="FunFam" id="2.20.25.30:FF:000003">
    <property type="entry name" value="50S ribosomal protein L37e"/>
    <property type="match status" value="1"/>
</dbReference>
<dbReference type="Gene3D" id="2.20.25.30">
    <property type="match status" value="1"/>
</dbReference>
<dbReference type="HAMAP" id="MF_00547">
    <property type="entry name" value="Ribosomal_eL37"/>
    <property type="match status" value="1"/>
</dbReference>
<dbReference type="InterPro" id="IPR001569">
    <property type="entry name" value="Ribosomal_eL37"/>
</dbReference>
<dbReference type="InterPro" id="IPR011331">
    <property type="entry name" value="Ribosomal_eL37/eL43"/>
</dbReference>
<dbReference type="InterPro" id="IPR018267">
    <property type="entry name" value="Ribosomal_eL37_CS"/>
</dbReference>
<dbReference type="InterPro" id="IPR011332">
    <property type="entry name" value="Ribosomal_zn-bd"/>
</dbReference>
<dbReference type="NCBIfam" id="NF003214">
    <property type="entry name" value="PRK04179.1"/>
    <property type="match status" value="1"/>
</dbReference>
<dbReference type="Pfam" id="PF01907">
    <property type="entry name" value="Ribosomal_L37e"/>
    <property type="match status" value="1"/>
</dbReference>
<dbReference type="SUPFAM" id="SSF57829">
    <property type="entry name" value="Zn-binding ribosomal proteins"/>
    <property type="match status" value="1"/>
</dbReference>
<dbReference type="PROSITE" id="PS01077">
    <property type="entry name" value="RIBOSOMAL_L37E"/>
    <property type="match status" value="1"/>
</dbReference>
<proteinExistence type="inferred from homology"/>
<protein>
    <recommendedName>
        <fullName evidence="1">Large ribosomal subunit protein eL37</fullName>
    </recommendedName>
    <alternativeName>
        <fullName evidence="2">50S ribosomal protein L37e</fullName>
    </alternativeName>
</protein>
<reference key="1">
    <citation type="journal article" date="2004" name="J. Bacteriol.">
        <title>Complete genome sequence of the genetically tractable hydrogenotrophic methanogen Methanococcus maripaludis.</title>
        <authorList>
            <person name="Hendrickson E.L."/>
            <person name="Kaul R."/>
            <person name="Zhou Y."/>
            <person name="Bovee D."/>
            <person name="Chapman P."/>
            <person name="Chung J."/>
            <person name="Conway de Macario E."/>
            <person name="Dodsworth J.A."/>
            <person name="Gillett W."/>
            <person name="Graham D.E."/>
            <person name="Hackett M."/>
            <person name="Haydock A.K."/>
            <person name="Kang A."/>
            <person name="Land M.L."/>
            <person name="Levy R."/>
            <person name="Lie T.J."/>
            <person name="Major T.A."/>
            <person name="Moore B.C."/>
            <person name="Porat I."/>
            <person name="Palmeiri A."/>
            <person name="Rouse G."/>
            <person name="Saenphimmachak C."/>
            <person name="Soell D."/>
            <person name="Van Dien S."/>
            <person name="Wang T."/>
            <person name="Whitman W.B."/>
            <person name="Xia Q."/>
            <person name="Zhang Y."/>
            <person name="Larimer F.W."/>
            <person name="Olson M.V."/>
            <person name="Leigh J.A."/>
        </authorList>
    </citation>
    <scope>NUCLEOTIDE SEQUENCE [LARGE SCALE GENOMIC DNA]</scope>
    <source>
        <strain>DSM 14266 / JCM 13030 / NBRC 101832 / S2 / LL</strain>
    </source>
</reference>